<feature type="chain" id="PRO_0000141340" description="Cobyric acid synthase">
    <location>
        <begin position="1"/>
        <end position="483"/>
    </location>
</feature>
<feature type="domain" description="GATase cobBQ-type" evidence="1">
    <location>
        <begin position="252"/>
        <end position="439"/>
    </location>
</feature>
<feature type="active site" description="Nucleophile" evidence="1">
    <location>
        <position position="333"/>
    </location>
</feature>
<feature type="active site" evidence="1">
    <location>
        <position position="431"/>
    </location>
</feature>
<name>COBQ_VIBPA</name>
<gene>
    <name evidence="1" type="primary">cobQ</name>
    <name type="ordered locus">VPA0932</name>
</gene>
<reference key="1">
    <citation type="journal article" date="2003" name="Lancet">
        <title>Genome sequence of Vibrio parahaemolyticus: a pathogenic mechanism distinct from that of V. cholerae.</title>
        <authorList>
            <person name="Makino K."/>
            <person name="Oshima K."/>
            <person name="Kurokawa K."/>
            <person name="Yokoyama K."/>
            <person name="Uda T."/>
            <person name="Tagomori K."/>
            <person name="Iijima Y."/>
            <person name="Najima M."/>
            <person name="Nakano M."/>
            <person name="Yamashita A."/>
            <person name="Kubota Y."/>
            <person name="Kimura S."/>
            <person name="Yasunaga T."/>
            <person name="Honda T."/>
            <person name="Shinagawa H."/>
            <person name="Hattori M."/>
            <person name="Iida T."/>
        </authorList>
    </citation>
    <scope>NUCLEOTIDE SEQUENCE [LARGE SCALE GENOMIC DNA]</scope>
    <source>
        <strain>RIMD 2210633</strain>
    </source>
</reference>
<accession>Q87HN1</accession>
<evidence type="ECO:0000255" key="1">
    <source>
        <dbReference type="HAMAP-Rule" id="MF_00028"/>
    </source>
</evidence>
<organism>
    <name type="scientific">Vibrio parahaemolyticus serotype O3:K6 (strain RIMD 2210633)</name>
    <dbReference type="NCBI Taxonomy" id="223926"/>
    <lineage>
        <taxon>Bacteria</taxon>
        <taxon>Pseudomonadati</taxon>
        <taxon>Pseudomonadota</taxon>
        <taxon>Gammaproteobacteria</taxon>
        <taxon>Vibrionales</taxon>
        <taxon>Vibrionaceae</taxon>
        <taxon>Vibrio</taxon>
    </lineage>
</organism>
<proteinExistence type="inferred from homology"/>
<sequence>MKSAIPSLMVQGTTSDAGKSVLVAGLCRVLARKGINVAPFKPQNMALNSAVTKDGGEIGRAQAVQAQACNIEPTVHMNPVLIKPNSDTGAQIILQGKALSNMDAASFHDYKKVAMNTVLDSFSKLTKEFDSIMIEGAGSPAEINLREGDIANMGFAEAADVPVIIVADIDRGGVFAHLYGTLALLSESEQTRVKGFVINRFRGDIRLLQSGLDWLEEKTGKPVLGVLPYLHGLNLEAEDAITAQQELNSEVKLNVVVPVLTRISNHTDFDVLRLNPDINLSYVGKGEKIDKADLIILPGTKSVRDDLAYLKSQGWDKDILRHIRLGGKVMGICGGYQMLGKTIDDPDGVEGEPGSSEGLGLLNVHTVLTGSKQLTKTEAVLNLNNQKAKVKGYEIHVGRSQVLDEQPLELDNGECDGAISECGQIMGTYLHGFFDEAEALNLITEWVNGTQVKQQDFEVLKEQGINRIADAIEQHMNLDFLFK</sequence>
<comment type="function">
    <text evidence="1">Catalyzes amidations at positions B, D, E, and G on adenosylcobyrinic A,C-diamide. NH(2) groups are provided by glutamine, and one molecule of ATP is hydrogenolyzed for each amidation.</text>
</comment>
<comment type="pathway">
    <text evidence="1">Cofactor biosynthesis; adenosylcobalamin biosynthesis.</text>
</comment>
<comment type="similarity">
    <text evidence="1">Belongs to the CobB/CobQ family. CobQ subfamily.</text>
</comment>
<keyword id="KW-0169">Cobalamin biosynthesis</keyword>
<keyword id="KW-0315">Glutamine amidotransferase</keyword>
<protein>
    <recommendedName>
        <fullName evidence="1">Cobyric acid synthase</fullName>
    </recommendedName>
</protein>
<dbReference type="EMBL" id="BA000032">
    <property type="protein sequence ID" value="BAC62275.1"/>
    <property type="molecule type" value="Genomic_DNA"/>
</dbReference>
<dbReference type="RefSeq" id="NP_800442.1">
    <property type="nucleotide sequence ID" value="NC_004605.1"/>
</dbReference>
<dbReference type="RefSeq" id="WP_005479326.1">
    <property type="nucleotide sequence ID" value="NC_004605.1"/>
</dbReference>
<dbReference type="SMR" id="Q87HN1"/>
<dbReference type="GeneID" id="1191621"/>
<dbReference type="KEGG" id="vpa:VPA0932"/>
<dbReference type="PATRIC" id="fig|223926.6.peg.3863"/>
<dbReference type="eggNOG" id="COG1492">
    <property type="taxonomic scope" value="Bacteria"/>
</dbReference>
<dbReference type="HOGENOM" id="CLU_019250_2_2_6"/>
<dbReference type="UniPathway" id="UPA00148"/>
<dbReference type="Proteomes" id="UP000002493">
    <property type="component" value="Chromosome 2"/>
</dbReference>
<dbReference type="GO" id="GO:0015420">
    <property type="term" value="F:ABC-type vitamin B12 transporter activity"/>
    <property type="evidence" value="ECO:0007669"/>
    <property type="project" value="UniProtKB-UniRule"/>
</dbReference>
<dbReference type="GO" id="GO:0003824">
    <property type="term" value="F:catalytic activity"/>
    <property type="evidence" value="ECO:0007669"/>
    <property type="project" value="InterPro"/>
</dbReference>
<dbReference type="GO" id="GO:0009236">
    <property type="term" value="P:cobalamin biosynthetic process"/>
    <property type="evidence" value="ECO:0007669"/>
    <property type="project" value="UniProtKB-UniRule"/>
</dbReference>
<dbReference type="CDD" id="cd05389">
    <property type="entry name" value="CobQ_N"/>
    <property type="match status" value="1"/>
</dbReference>
<dbReference type="CDD" id="cd01750">
    <property type="entry name" value="GATase1_CobQ"/>
    <property type="match status" value="1"/>
</dbReference>
<dbReference type="Gene3D" id="3.40.50.880">
    <property type="match status" value="1"/>
</dbReference>
<dbReference type="Gene3D" id="3.40.50.300">
    <property type="entry name" value="P-loop containing nucleotide triphosphate hydrolases"/>
    <property type="match status" value="1"/>
</dbReference>
<dbReference type="HAMAP" id="MF_00028">
    <property type="entry name" value="CobQ"/>
    <property type="match status" value="1"/>
</dbReference>
<dbReference type="InterPro" id="IPR029062">
    <property type="entry name" value="Class_I_gatase-like"/>
</dbReference>
<dbReference type="InterPro" id="IPR002586">
    <property type="entry name" value="CobQ/CobB/MinD/ParA_Nub-bd_dom"/>
</dbReference>
<dbReference type="InterPro" id="IPR033949">
    <property type="entry name" value="CobQ_GATase1"/>
</dbReference>
<dbReference type="InterPro" id="IPR047045">
    <property type="entry name" value="CobQ_N"/>
</dbReference>
<dbReference type="InterPro" id="IPR004459">
    <property type="entry name" value="CobQ_synth"/>
</dbReference>
<dbReference type="InterPro" id="IPR011698">
    <property type="entry name" value="GATase_3"/>
</dbReference>
<dbReference type="InterPro" id="IPR027417">
    <property type="entry name" value="P-loop_NTPase"/>
</dbReference>
<dbReference type="NCBIfam" id="TIGR00313">
    <property type="entry name" value="cobQ"/>
    <property type="match status" value="1"/>
</dbReference>
<dbReference type="NCBIfam" id="NF001989">
    <property type="entry name" value="PRK00784.1"/>
    <property type="match status" value="1"/>
</dbReference>
<dbReference type="PANTHER" id="PTHR21343:SF1">
    <property type="entry name" value="COBYRIC ACID SYNTHASE"/>
    <property type="match status" value="1"/>
</dbReference>
<dbReference type="PANTHER" id="PTHR21343">
    <property type="entry name" value="DETHIOBIOTIN SYNTHETASE"/>
    <property type="match status" value="1"/>
</dbReference>
<dbReference type="Pfam" id="PF01656">
    <property type="entry name" value="CbiA"/>
    <property type="match status" value="1"/>
</dbReference>
<dbReference type="Pfam" id="PF07685">
    <property type="entry name" value="GATase_3"/>
    <property type="match status" value="1"/>
</dbReference>
<dbReference type="SUPFAM" id="SSF52317">
    <property type="entry name" value="Class I glutamine amidotransferase-like"/>
    <property type="match status" value="1"/>
</dbReference>
<dbReference type="SUPFAM" id="SSF52540">
    <property type="entry name" value="P-loop containing nucleoside triphosphate hydrolases"/>
    <property type="match status" value="1"/>
</dbReference>
<dbReference type="PROSITE" id="PS51274">
    <property type="entry name" value="GATASE_COBBQ"/>
    <property type="match status" value="1"/>
</dbReference>